<name>PPIL4_ASPOR</name>
<proteinExistence type="inferred from homology"/>
<comment type="function">
    <text evidence="1">PPIases accelerate the folding of proteins. It catalyzes the cis-trans isomerization of proline imidic peptide bonds in oligopeptides (By similarity).</text>
</comment>
<comment type="catalytic activity">
    <reaction>
        <text>[protein]-peptidylproline (omega=180) = [protein]-peptidylproline (omega=0)</text>
        <dbReference type="Rhea" id="RHEA:16237"/>
        <dbReference type="Rhea" id="RHEA-COMP:10747"/>
        <dbReference type="Rhea" id="RHEA-COMP:10748"/>
        <dbReference type="ChEBI" id="CHEBI:83833"/>
        <dbReference type="ChEBI" id="CHEBI:83834"/>
        <dbReference type="EC" id="5.2.1.8"/>
    </reaction>
</comment>
<comment type="subcellular location">
    <subcellularLocation>
        <location evidence="1">Nucleus</location>
    </subcellularLocation>
</comment>
<comment type="similarity">
    <text evidence="6">Belongs to the cyclophilin-type PPIase family. PPIL4 subfamily.</text>
</comment>
<evidence type="ECO:0000250" key="1"/>
<evidence type="ECO:0000255" key="2"/>
<evidence type="ECO:0000255" key="3">
    <source>
        <dbReference type="PROSITE-ProRule" id="PRU00156"/>
    </source>
</evidence>
<evidence type="ECO:0000255" key="4">
    <source>
        <dbReference type="PROSITE-ProRule" id="PRU00176"/>
    </source>
</evidence>
<evidence type="ECO:0000256" key="5">
    <source>
        <dbReference type="SAM" id="MobiDB-lite"/>
    </source>
</evidence>
<evidence type="ECO:0000305" key="6"/>
<sequence>MSVLLETSLGDIVIDLLVDECPKACENFLKLCKVKYYNFSPVHSVQKNFTFQTGDPLGPDSSESDGGSSIWGLLEGPPKRTFSLEPPPKLKHDERGTVSMATVPSPHDPDQRIAASQFIVTLGENLDYLDGKAVIFGKVVEGFDVLEKVNEAFIDDRGRPLKDIRIRHTVILDDPFDDPPGLVAPAESPLPSKAQLATVRIADDEELDDNMDEESMEKLRREREARAQALTLEMVGDLPFAEVKPPENVLFVCKLNPVTQDEDLHLIFSRFGTILSCEVIRDKRTGDSLQYAFIEFENQKDCEQAYFKMQGVLIDDHRIHVDFSQSVSKLSESWRNATISKRSGQRGGFGGVASLEKKRQYRASDNAREKENDYTLVFDKGDKAPRRRSYSRSPQRSSNRDRRASRSPRRDSYRDPYRRRPGDRSHSRSPARGEYRDKDRGRYNHRERRRDDERYRERRRR</sequence>
<protein>
    <recommendedName>
        <fullName>Peptidyl-prolyl cis-trans isomerase-like 4</fullName>
        <shortName>PPIase</shortName>
        <ecNumber>5.2.1.8</ecNumber>
    </recommendedName>
    <alternativeName>
        <fullName>Rotamase</fullName>
    </alternativeName>
</protein>
<organism>
    <name type="scientific">Aspergillus oryzae (strain ATCC 42149 / RIB 40)</name>
    <name type="common">Yellow koji mold</name>
    <dbReference type="NCBI Taxonomy" id="510516"/>
    <lineage>
        <taxon>Eukaryota</taxon>
        <taxon>Fungi</taxon>
        <taxon>Dikarya</taxon>
        <taxon>Ascomycota</taxon>
        <taxon>Pezizomycotina</taxon>
        <taxon>Eurotiomycetes</taxon>
        <taxon>Eurotiomycetidae</taxon>
        <taxon>Eurotiales</taxon>
        <taxon>Aspergillaceae</taxon>
        <taxon>Aspergillus</taxon>
        <taxon>Aspergillus subgen. Circumdati</taxon>
    </lineage>
</organism>
<reference key="1">
    <citation type="journal article" date="2005" name="Nature">
        <title>Genome sequencing and analysis of Aspergillus oryzae.</title>
        <authorList>
            <person name="Machida M."/>
            <person name="Asai K."/>
            <person name="Sano M."/>
            <person name="Tanaka T."/>
            <person name="Kumagai T."/>
            <person name="Terai G."/>
            <person name="Kusumoto K."/>
            <person name="Arima T."/>
            <person name="Akita O."/>
            <person name="Kashiwagi Y."/>
            <person name="Abe K."/>
            <person name="Gomi K."/>
            <person name="Horiuchi H."/>
            <person name="Kitamoto K."/>
            <person name="Kobayashi T."/>
            <person name="Takeuchi M."/>
            <person name="Denning D.W."/>
            <person name="Galagan J.E."/>
            <person name="Nierman W.C."/>
            <person name="Yu J."/>
            <person name="Archer D.B."/>
            <person name="Bennett J.W."/>
            <person name="Bhatnagar D."/>
            <person name="Cleveland T.E."/>
            <person name="Fedorova N.D."/>
            <person name="Gotoh O."/>
            <person name="Horikawa H."/>
            <person name="Hosoyama A."/>
            <person name="Ichinomiya M."/>
            <person name="Igarashi R."/>
            <person name="Iwashita K."/>
            <person name="Juvvadi P.R."/>
            <person name="Kato M."/>
            <person name="Kato Y."/>
            <person name="Kin T."/>
            <person name="Kokubun A."/>
            <person name="Maeda H."/>
            <person name="Maeyama N."/>
            <person name="Maruyama J."/>
            <person name="Nagasaki H."/>
            <person name="Nakajima T."/>
            <person name="Oda K."/>
            <person name="Okada K."/>
            <person name="Paulsen I."/>
            <person name="Sakamoto K."/>
            <person name="Sawano T."/>
            <person name="Takahashi M."/>
            <person name="Takase K."/>
            <person name="Terabayashi Y."/>
            <person name="Wortman J.R."/>
            <person name="Yamada O."/>
            <person name="Yamagata Y."/>
            <person name="Anazawa H."/>
            <person name="Hata Y."/>
            <person name="Koide Y."/>
            <person name="Komori T."/>
            <person name="Koyama Y."/>
            <person name="Minetoki T."/>
            <person name="Suharnan S."/>
            <person name="Tanaka A."/>
            <person name="Isono K."/>
            <person name="Kuhara S."/>
            <person name="Ogasawara N."/>
            <person name="Kikuchi H."/>
        </authorList>
    </citation>
    <scope>NUCLEOTIDE SEQUENCE [LARGE SCALE GENOMIC DNA]</scope>
    <source>
        <strain>ATCC 42149 / RIB 40</strain>
    </source>
</reference>
<gene>
    <name type="primary">cyp6</name>
    <name type="ORF">AO090038000594</name>
</gene>
<accession>Q2U256</accession>
<dbReference type="EC" id="5.2.1.8"/>
<dbReference type="EMBL" id="BA000054">
    <property type="protein sequence ID" value="BAE64359.1"/>
    <property type="molecule type" value="Genomic_DNA"/>
</dbReference>
<dbReference type="RefSeq" id="XP_001825492.1">
    <property type="nucleotide sequence ID" value="XM_001825440.2"/>
</dbReference>
<dbReference type="SMR" id="Q2U256"/>
<dbReference type="STRING" id="510516.Q2U256"/>
<dbReference type="EnsemblFungi" id="BAE64359">
    <property type="protein sequence ID" value="BAE64359"/>
    <property type="gene ID" value="AO090038000594"/>
</dbReference>
<dbReference type="GeneID" id="5997587"/>
<dbReference type="KEGG" id="aor:AO090038000594"/>
<dbReference type="VEuPathDB" id="FungiDB:AO090038000594"/>
<dbReference type="HOGENOM" id="CLU_018791_2_1_1"/>
<dbReference type="OMA" id="APKCCEN"/>
<dbReference type="OrthoDB" id="117428at5052"/>
<dbReference type="Proteomes" id="UP000006564">
    <property type="component" value="Chromosome 6"/>
</dbReference>
<dbReference type="GO" id="GO:0005634">
    <property type="term" value="C:nucleus"/>
    <property type="evidence" value="ECO:0007669"/>
    <property type="project" value="UniProtKB-SubCell"/>
</dbReference>
<dbReference type="GO" id="GO:0003755">
    <property type="term" value="F:peptidyl-prolyl cis-trans isomerase activity"/>
    <property type="evidence" value="ECO:0007669"/>
    <property type="project" value="UniProtKB-KW"/>
</dbReference>
<dbReference type="GO" id="GO:0003723">
    <property type="term" value="F:RNA binding"/>
    <property type="evidence" value="ECO:0007669"/>
    <property type="project" value="UniProtKB-KW"/>
</dbReference>
<dbReference type="CDD" id="cd01921">
    <property type="entry name" value="cyclophilin_RRM"/>
    <property type="match status" value="1"/>
</dbReference>
<dbReference type="CDD" id="cd12235">
    <property type="entry name" value="RRM_PPIL4"/>
    <property type="match status" value="1"/>
</dbReference>
<dbReference type="FunFam" id="2.40.100.10:FF:000015">
    <property type="entry name" value="Peptidyl-prolyl cis-trans isomerase"/>
    <property type="match status" value="1"/>
</dbReference>
<dbReference type="FunFam" id="3.30.70.330:FF:000377">
    <property type="entry name" value="Peptidyl-prolyl cis-trans isomerase"/>
    <property type="match status" value="1"/>
</dbReference>
<dbReference type="Gene3D" id="3.30.70.330">
    <property type="match status" value="1"/>
</dbReference>
<dbReference type="Gene3D" id="2.40.100.10">
    <property type="entry name" value="Cyclophilin-like"/>
    <property type="match status" value="1"/>
</dbReference>
<dbReference type="InterPro" id="IPR035542">
    <property type="entry name" value="CRIP"/>
</dbReference>
<dbReference type="InterPro" id="IPR029000">
    <property type="entry name" value="Cyclophilin-like_dom_sf"/>
</dbReference>
<dbReference type="InterPro" id="IPR002130">
    <property type="entry name" value="Cyclophilin-type_PPIase_dom"/>
</dbReference>
<dbReference type="InterPro" id="IPR035538">
    <property type="entry name" value="Cyclophilin_PPIL4"/>
</dbReference>
<dbReference type="InterPro" id="IPR012677">
    <property type="entry name" value="Nucleotide-bd_a/b_plait_sf"/>
</dbReference>
<dbReference type="InterPro" id="IPR035979">
    <property type="entry name" value="RBD_domain_sf"/>
</dbReference>
<dbReference type="InterPro" id="IPR000504">
    <property type="entry name" value="RRM_dom"/>
</dbReference>
<dbReference type="PANTHER" id="PTHR45843">
    <property type="entry name" value="PEPTIDYL-PROLYL CIS-TRANS ISOMERASE-LIKE 4"/>
    <property type="match status" value="1"/>
</dbReference>
<dbReference type="PANTHER" id="PTHR45843:SF1">
    <property type="entry name" value="PEPTIDYL-PROLYL CIS-TRANS ISOMERASE-LIKE 4"/>
    <property type="match status" value="1"/>
</dbReference>
<dbReference type="Pfam" id="PF00160">
    <property type="entry name" value="Pro_isomerase"/>
    <property type="match status" value="1"/>
</dbReference>
<dbReference type="Pfam" id="PF00076">
    <property type="entry name" value="RRM_1"/>
    <property type="match status" value="1"/>
</dbReference>
<dbReference type="PRINTS" id="PR00153">
    <property type="entry name" value="CSAPPISMRASE"/>
</dbReference>
<dbReference type="SMART" id="SM00360">
    <property type="entry name" value="RRM"/>
    <property type="match status" value="1"/>
</dbReference>
<dbReference type="SUPFAM" id="SSF50891">
    <property type="entry name" value="Cyclophilin-like"/>
    <property type="match status" value="1"/>
</dbReference>
<dbReference type="SUPFAM" id="SSF54928">
    <property type="entry name" value="RNA-binding domain, RBD"/>
    <property type="match status" value="1"/>
</dbReference>
<dbReference type="PROSITE" id="PS50072">
    <property type="entry name" value="CSA_PPIASE_2"/>
    <property type="match status" value="1"/>
</dbReference>
<dbReference type="PROSITE" id="PS50102">
    <property type="entry name" value="RRM"/>
    <property type="match status" value="1"/>
</dbReference>
<feature type="chain" id="PRO_0000232975" description="Peptidyl-prolyl cis-trans isomerase-like 4">
    <location>
        <begin position="1"/>
        <end position="461"/>
    </location>
</feature>
<feature type="domain" description="PPIase cyclophilin-type" evidence="3">
    <location>
        <begin position="1"/>
        <end position="171"/>
    </location>
</feature>
<feature type="domain" description="RRM" evidence="4">
    <location>
        <begin position="248"/>
        <end position="326"/>
    </location>
</feature>
<feature type="region of interest" description="Disordered" evidence="5">
    <location>
        <begin position="341"/>
        <end position="461"/>
    </location>
</feature>
<feature type="coiled-coil region" evidence="2">
    <location>
        <begin position="205"/>
        <end position="234"/>
    </location>
</feature>
<feature type="compositionally biased region" description="Basic and acidic residues" evidence="5">
    <location>
        <begin position="365"/>
        <end position="384"/>
    </location>
</feature>
<feature type="compositionally biased region" description="Basic and acidic residues" evidence="5">
    <location>
        <begin position="398"/>
        <end position="461"/>
    </location>
</feature>
<keyword id="KW-0175">Coiled coil</keyword>
<keyword id="KW-0413">Isomerase</keyword>
<keyword id="KW-0539">Nucleus</keyword>
<keyword id="KW-1185">Reference proteome</keyword>
<keyword id="KW-0694">RNA-binding</keyword>
<keyword id="KW-0697">Rotamase</keyword>